<dbReference type="EC" id="2.7.11.1" evidence="8"/>
<dbReference type="EMBL" id="AY778962">
    <property type="protein sequence ID" value="AAV91326.1"/>
    <property type="molecule type" value="mRNA"/>
</dbReference>
<dbReference type="EMBL" id="AK220286">
    <property type="protein sequence ID" value="BAD90211.1"/>
    <property type="status" value="ALT_SEQ"/>
    <property type="molecule type" value="mRNA"/>
</dbReference>
<dbReference type="EMBL" id="BC004044">
    <property type="protein sequence ID" value="AAH04044.3"/>
    <property type="status" value="ALT_SEQ"/>
    <property type="molecule type" value="mRNA"/>
</dbReference>
<dbReference type="EMBL" id="BC025814">
    <property type="protein sequence ID" value="AAH25814.1"/>
    <property type="status" value="ALT_INIT"/>
    <property type="molecule type" value="mRNA"/>
</dbReference>
<dbReference type="EMBL" id="BC025826">
    <property type="protein sequence ID" value="AAH25826.1"/>
    <property type="status" value="ALT_INIT"/>
    <property type="molecule type" value="mRNA"/>
</dbReference>
<dbReference type="EMBL" id="CT010363">
    <property type="protein sequence ID" value="CAJ18570.1"/>
    <property type="molecule type" value="mRNA"/>
</dbReference>
<dbReference type="CCDS" id="CCDS51681.1"/>
<dbReference type="RefSeq" id="NP_085042.2">
    <property type="nucleotide sequence ID" value="NM_030565.6"/>
</dbReference>
<dbReference type="SMR" id="Q5MJS3"/>
<dbReference type="FunCoup" id="Q5MJS3">
    <property type="interactions" value="635"/>
</dbReference>
<dbReference type="IntAct" id="Q5MJS3">
    <property type="interactions" value="1"/>
</dbReference>
<dbReference type="STRING" id="10090.ENSMUSP00000026972"/>
<dbReference type="GlyCosmos" id="Q5MJS3">
    <property type="glycosylation" value="1 site, No reported glycans"/>
</dbReference>
<dbReference type="GlyGen" id="Q5MJS3">
    <property type="glycosylation" value="2 sites, 2 N-linked glycans (2 sites)"/>
</dbReference>
<dbReference type="iPTMnet" id="Q5MJS3"/>
<dbReference type="PhosphoSitePlus" id="Q5MJS3"/>
<dbReference type="jPOST" id="Q5MJS3"/>
<dbReference type="PaxDb" id="10090-ENSMUSP00000026972"/>
<dbReference type="PeptideAtlas" id="Q5MJS3"/>
<dbReference type="ProteomicsDB" id="271540"/>
<dbReference type="Antibodypedia" id="5456">
    <property type="antibodies" value="149 antibodies from 24 providers"/>
</dbReference>
<dbReference type="DNASU" id="80752"/>
<dbReference type="Ensembl" id="ENSMUST00000026972.8">
    <property type="protein sequence ID" value="ENSMUSP00000026972.8"/>
    <property type="gene ID" value="ENSMUSG00000025854.16"/>
</dbReference>
<dbReference type="GeneID" id="80752"/>
<dbReference type="KEGG" id="mmu:80752"/>
<dbReference type="UCSC" id="uc009afv.2">
    <property type="organism name" value="mouse"/>
</dbReference>
<dbReference type="AGR" id="MGI:2136853"/>
<dbReference type="CTD" id="56975"/>
<dbReference type="MGI" id="MGI:2136853">
    <property type="gene designation" value="Fam20c"/>
</dbReference>
<dbReference type="VEuPathDB" id="HostDB:ENSMUSG00000025854"/>
<dbReference type="eggNOG" id="KOG3829">
    <property type="taxonomic scope" value="Eukaryota"/>
</dbReference>
<dbReference type="GeneTree" id="ENSGT00950000182951"/>
<dbReference type="HOGENOM" id="CLU_028926_2_0_1"/>
<dbReference type="InParanoid" id="Q5MJS3"/>
<dbReference type="OMA" id="AAENQDW"/>
<dbReference type="OrthoDB" id="8583677at2759"/>
<dbReference type="PhylomeDB" id="Q5MJS3"/>
<dbReference type="TreeFam" id="TF313276"/>
<dbReference type="Reactome" id="R-MMU-381426">
    <property type="pathway name" value="Regulation of Insulin-like Growth Factor (IGF) transport and uptake by Insulin-like Growth Factor Binding Proteins (IGFBPs)"/>
</dbReference>
<dbReference type="Reactome" id="R-MMU-8957275">
    <property type="pathway name" value="Post-translational protein phosphorylation"/>
</dbReference>
<dbReference type="SABIO-RK" id="Q5MJS3"/>
<dbReference type="BioGRID-ORCS" id="80752">
    <property type="hits" value="2 hits in 78 CRISPR screens"/>
</dbReference>
<dbReference type="ChiTaRS" id="Fam20c">
    <property type="organism name" value="mouse"/>
</dbReference>
<dbReference type="PRO" id="PR:Q5MJS3"/>
<dbReference type="Proteomes" id="UP000000589">
    <property type="component" value="Chromosome 5"/>
</dbReference>
<dbReference type="RNAct" id="Q5MJS3">
    <property type="molecule type" value="protein"/>
</dbReference>
<dbReference type="Bgee" id="ENSMUSG00000025854">
    <property type="expression patterns" value="Expressed in molar tooth and 241 other cell types or tissues"/>
</dbReference>
<dbReference type="ExpressionAtlas" id="Q5MJS3">
    <property type="expression patterns" value="baseline and differential"/>
</dbReference>
<dbReference type="GO" id="GO:0005737">
    <property type="term" value="C:cytoplasm"/>
    <property type="evidence" value="ECO:0000314"/>
    <property type="project" value="UniProtKB"/>
</dbReference>
<dbReference type="GO" id="GO:0005783">
    <property type="term" value="C:endoplasmic reticulum"/>
    <property type="evidence" value="ECO:0007669"/>
    <property type="project" value="UniProtKB-SubCell"/>
</dbReference>
<dbReference type="GO" id="GO:0005615">
    <property type="term" value="C:extracellular space"/>
    <property type="evidence" value="ECO:0000314"/>
    <property type="project" value="MGI"/>
</dbReference>
<dbReference type="GO" id="GO:0005794">
    <property type="term" value="C:Golgi apparatus"/>
    <property type="evidence" value="ECO:0000314"/>
    <property type="project" value="UniProtKB"/>
</dbReference>
<dbReference type="GO" id="GO:0000139">
    <property type="term" value="C:Golgi membrane"/>
    <property type="evidence" value="ECO:0000250"/>
    <property type="project" value="UniProtKB"/>
</dbReference>
<dbReference type="GO" id="GO:0005654">
    <property type="term" value="C:nucleoplasm"/>
    <property type="evidence" value="ECO:0007669"/>
    <property type="project" value="Ensembl"/>
</dbReference>
<dbReference type="GO" id="GO:0005524">
    <property type="term" value="F:ATP binding"/>
    <property type="evidence" value="ECO:0007669"/>
    <property type="project" value="UniProtKB-KW"/>
</dbReference>
<dbReference type="GO" id="GO:0005509">
    <property type="term" value="F:calcium ion binding"/>
    <property type="evidence" value="ECO:0000314"/>
    <property type="project" value="MGI"/>
</dbReference>
<dbReference type="GO" id="GO:0030145">
    <property type="term" value="F:manganese ion binding"/>
    <property type="evidence" value="ECO:0000250"/>
    <property type="project" value="UniProtKB"/>
</dbReference>
<dbReference type="GO" id="GO:0002020">
    <property type="term" value="F:protease binding"/>
    <property type="evidence" value="ECO:0007669"/>
    <property type="project" value="Ensembl"/>
</dbReference>
<dbReference type="GO" id="GO:0106310">
    <property type="term" value="F:protein serine kinase activity"/>
    <property type="evidence" value="ECO:0007669"/>
    <property type="project" value="RHEA"/>
</dbReference>
<dbReference type="GO" id="GO:0004674">
    <property type="term" value="F:protein serine/threonine kinase activity"/>
    <property type="evidence" value="ECO:0000314"/>
    <property type="project" value="UniProtKB"/>
</dbReference>
<dbReference type="GO" id="GO:0031214">
    <property type="term" value="P:biomineral tissue development"/>
    <property type="evidence" value="ECO:0000250"/>
    <property type="project" value="UniProtKB"/>
</dbReference>
<dbReference type="GO" id="GO:0097187">
    <property type="term" value="P:dentinogenesis"/>
    <property type="evidence" value="ECO:0000315"/>
    <property type="project" value="MGI"/>
</dbReference>
<dbReference type="GO" id="GO:0070166">
    <property type="term" value="P:enamel mineralization"/>
    <property type="evidence" value="ECO:0000315"/>
    <property type="project" value="MGI"/>
</dbReference>
<dbReference type="GO" id="GO:0071895">
    <property type="term" value="P:odontoblast differentiation"/>
    <property type="evidence" value="ECO:0000314"/>
    <property type="project" value="MGI"/>
</dbReference>
<dbReference type="GO" id="GO:0036179">
    <property type="term" value="P:osteoclast maturation"/>
    <property type="evidence" value="ECO:0000315"/>
    <property type="project" value="MGI"/>
</dbReference>
<dbReference type="GO" id="GO:0030501">
    <property type="term" value="P:positive regulation of bone mineralization"/>
    <property type="evidence" value="ECO:0000314"/>
    <property type="project" value="MGI"/>
</dbReference>
<dbReference type="GO" id="GO:0045669">
    <property type="term" value="P:positive regulation of osteoblast differentiation"/>
    <property type="evidence" value="ECO:0000314"/>
    <property type="project" value="MGI"/>
</dbReference>
<dbReference type="GO" id="GO:0006468">
    <property type="term" value="P:protein phosphorylation"/>
    <property type="evidence" value="ECO:0000314"/>
    <property type="project" value="UniProtKB"/>
</dbReference>
<dbReference type="GO" id="GO:0040036">
    <property type="term" value="P:regulation of fibroblast growth factor receptor signaling pathway"/>
    <property type="evidence" value="ECO:0000315"/>
    <property type="project" value="MGI"/>
</dbReference>
<dbReference type="GO" id="GO:0051174">
    <property type="term" value="P:regulation of phosphorus metabolic process"/>
    <property type="evidence" value="ECO:0000315"/>
    <property type="project" value="MGI"/>
</dbReference>
<dbReference type="GO" id="GO:0001501">
    <property type="term" value="P:skeletal system development"/>
    <property type="evidence" value="ECO:0000315"/>
    <property type="project" value="MGI"/>
</dbReference>
<dbReference type="CDD" id="cd10471">
    <property type="entry name" value="FAM20C_C"/>
    <property type="match status" value="1"/>
</dbReference>
<dbReference type="InterPro" id="IPR024869">
    <property type="entry name" value="FAM20"/>
</dbReference>
<dbReference type="InterPro" id="IPR009581">
    <property type="entry name" value="FAM20_C"/>
</dbReference>
<dbReference type="PANTHER" id="PTHR12450">
    <property type="entry name" value="DENTIN MATRIX PROTEIN 4 PROTEIN FAM20"/>
    <property type="match status" value="1"/>
</dbReference>
<dbReference type="PANTHER" id="PTHR12450:SF11">
    <property type="entry name" value="EXTRACELLULAR SERINE_THREONINE PROTEIN KINASE FAM20C"/>
    <property type="match status" value="1"/>
</dbReference>
<dbReference type="Pfam" id="PF06702">
    <property type="entry name" value="Fam20C"/>
    <property type="match status" value="1"/>
</dbReference>
<feature type="propeptide" id="PRO_0000433884" evidence="1">
    <location>
        <begin position="1"/>
        <end position="87"/>
    </location>
</feature>
<feature type="chain" id="PRO_0000297978" description="Extracellular serine/threonine protein kinase FAM20C">
    <location>
        <begin position="88"/>
        <end position="579"/>
    </location>
</feature>
<feature type="topological domain" description="Cytoplasmic" evidence="13">
    <location>
        <begin position="1"/>
        <end position="10"/>
    </location>
</feature>
<feature type="transmembrane region" description="Helical; Signal-anchor for type II membrane protein" evidence="3">
    <location>
        <begin position="11"/>
        <end position="31"/>
    </location>
</feature>
<feature type="topological domain" description="Lumenal" evidence="13">
    <location>
        <begin position="32"/>
        <end position="579"/>
    </location>
</feature>
<feature type="region of interest" description="Disordered" evidence="4">
    <location>
        <begin position="38"/>
        <end position="79"/>
    </location>
</feature>
<feature type="region of interest" description="Disordered" evidence="4">
    <location>
        <begin position="104"/>
        <end position="155"/>
    </location>
</feature>
<feature type="region of interest" description="Kinase domain" evidence="1">
    <location>
        <begin position="349"/>
        <end position="560"/>
    </location>
</feature>
<feature type="compositionally biased region" description="Low complexity" evidence="4">
    <location>
        <begin position="49"/>
        <end position="63"/>
    </location>
</feature>
<feature type="compositionally biased region" description="Basic and acidic residues" evidence="4">
    <location>
        <begin position="111"/>
        <end position="120"/>
    </location>
</feature>
<feature type="compositionally biased region" description="Basic and acidic residues" evidence="4">
    <location>
        <begin position="128"/>
        <end position="140"/>
    </location>
</feature>
<feature type="active site" evidence="1">
    <location>
        <position position="453"/>
    </location>
</feature>
<feature type="binding site" evidence="2">
    <location>
        <position position="264"/>
    </location>
    <ligand>
        <name>ATP</name>
        <dbReference type="ChEBI" id="CHEBI:30616"/>
    </ligand>
</feature>
<feature type="binding site" evidence="2">
    <location>
        <position position="280"/>
    </location>
    <ligand>
        <name>ATP</name>
        <dbReference type="ChEBI" id="CHEBI:30616"/>
    </ligand>
</feature>
<feature type="binding site" evidence="2">
    <location>
        <position position="301"/>
    </location>
    <ligand>
        <name>ATP</name>
        <dbReference type="ChEBI" id="CHEBI:30616"/>
    </ligand>
</feature>
<feature type="binding site" evidence="2">
    <location>
        <position position="301"/>
    </location>
    <ligand>
        <name>Mn(2+)</name>
        <dbReference type="ChEBI" id="CHEBI:29035"/>
    </ligand>
</feature>
<feature type="binding site" evidence="2">
    <location>
        <begin position="384"/>
        <end position="387"/>
    </location>
    <ligand>
        <name>ATP</name>
        <dbReference type="ChEBI" id="CHEBI:30616"/>
    </ligand>
</feature>
<feature type="binding site" evidence="2">
    <location>
        <position position="458"/>
    </location>
    <ligand>
        <name>ATP</name>
        <dbReference type="ChEBI" id="CHEBI:30616"/>
    </ligand>
</feature>
<feature type="binding site" evidence="2">
    <location>
        <position position="473"/>
    </location>
    <ligand>
        <name>ATP</name>
        <dbReference type="ChEBI" id="CHEBI:30616"/>
    </ligand>
</feature>
<feature type="binding site" evidence="2">
    <location>
        <position position="473"/>
    </location>
    <ligand>
        <name>Mn(2+)</name>
        <dbReference type="ChEBI" id="CHEBI:29035"/>
    </ligand>
</feature>
<feature type="site" description="Cleavage; by MBTPS1" evidence="1">
    <location>
        <begin position="87"/>
        <end position="88"/>
    </location>
</feature>
<feature type="glycosylation site" description="N-linked (GlcNAc...) asparagine" evidence="3">
    <location>
        <position position="96"/>
    </location>
</feature>
<feature type="disulfide bond" description="Interchain" evidence="1">
    <location>
        <position position="46"/>
    </location>
</feature>
<feature type="disulfide bond" description="Interchain" evidence="1">
    <location>
        <position position="48"/>
    </location>
</feature>
<feature type="disulfide bond" evidence="2">
    <location>
        <begin position="357"/>
        <end position="373"/>
    </location>
</feature>
<feature type="disulfide bond" evidence="2">
    <location>
        <begin position="362"/>
        <end position="366"/>
    </location>
</feature>
<feature type="disulfide bond" evidence="2">
    <location>
        <begin position="421"/>
        <end position="495"/>
    </location>
</feature>
<feature type="disulfide bond" evidence="2">
    <location>
        <begin position="496"/>
        <end position="555"/>
    </location>
</feature>
<feature type="mutagenesis site" description="Abrogates kinase activity." evidence="8">
    <original>I</original>
    <variation>N</variation>
    <location>
        <position position="241"/>
    </location>
</feature>
<feature type="mutagenesis site" description="Abrogates kinase activity." evidence="8">
    <original>G</original>
    <variation>R</variation>
    <location>
        <position position="261"/>
    </location>
</feature>
<feature type="mutagenesis site" description="Abrogates kinase activity." evidence="8">
    <original>G</original>
    <variation>E</variation>
    <variation>R</variation>
    <location>
        <position position="374"/>
    </location>
</feature>
<feature type="mutagenesis site" description="Mislocalization of the protein from Golgi apparatus to endoplasmic reticulum." evidence="8">
    <original>L</original>
    <variation>R</variation>
    <location>
        <position position="383"/>
    </location>
</feature>
<feature type="mutagenesis site" description="Mislocalization of the protein from Golgi apparatus to endoplasmic reticulum." evidence="8">
    <original>D</original>
    <variation>N</variation>
    <location>
        <position position="446"/>
    </location>
</feature>
<feature type="mutagenesis site" description="Abrogates kinase activity without affecting subcellular location." evidence="8">
    <original>D</original>
    <variation>G</variation>
    <location>
        <position position="453"/>
    </location>
</feature>
<feature type="mutagenesis site" description="Abrogates kinase activity." evidence="8">
    <original>DN</original>
    <variation>GG</variation>
    <location>
        <begin position="473"/>
        <end position="474"/>
    </location>
</feature>
<feature type="mutagenesis site" description="Mislocalization of the protein from Golgi apparatus to endoplasmic reticulum." evidence="8">
    <original>R</original>
    <variation>W</variation>
    <location>
        <position position="544"/>
    </location>
</feature>
<feature type="sequence conflict" description="In Ref. 4; CAJ18570." evidence="13" ref="4">
    <original>K</original>
    <variation>N</variation>
    <location>
        <position position="333"/>
    </location>
</feature>
<sequence>MKMILVRRFRVLILVVFLLACALHIAVDLLPKLDRRATRSSGEPGCSCAQPAAEAAGPGWAQARSRPGESAGGDAGWPNKHTLRILQDFSSDPASNLTSHSLEKLPSAAEPVDHAPRGQEPRSPPPRDPAHRPLLRDPGPRPRVPPPGPSGDGSLLAKLFEHPLYQGAVPPLTEDDVLFNVNSDIRFNPKAAENPDWPHEGAEGAEFLPTGEAAVNLYPNWLKFHIGINRYELYSRHNPAIDALLRDLGSQKITSVAMKSGGTQLKLIMTFQNYGQALFKPMKQTREQETPPDFFYFSDYERHNAEIAAFHLDRILDFRRVPPVAGRMINMTKEIRDVTRDKKLWRTFFVSPANNICFYGECSYYCSTEHALCGRPDQIEGSLAAFLPDLSLAKRKTWRNPWRRSYHKRKKAEWEVDPDYCEEVKQTPPYDSGHRILDIMDMTVFDFLMGNMDRHHYETFEKFGNETFIIHLDNGRGFGKYSHDELSILAPLHQCCRIRRSTYLRLQLLAKEEHKLSLLMAESLQHDKVAPVLYQLHLEALDRRLRIVLQAVRDCVEKDGLSSVVEDDLATEHRASTER</sequence>
<organism>
    <name type="scientific">Mus musculus</name>
    <name type="common">Mouse</name>
    <dbReference type="NCBI Taxonomy" id="10090"/>
    <lineage>
        <taxon>Eukaryota</taxon>
        <taxon>Metazoa</taxon>
        <taxon>Chordata</taxon>
        <taxon>Craniata</taxon>
        <taxon>Vertebrata</taxon>
        <taxon>Euteleostomi</taxon>
        <taxon>Mammalia</taxon>
        <taxon>Eutheria</taxon>
        <taxon>Euarchontoglires</taxon>
        <taxon>Glires</taxon>
        <taxon>Rodentia</taxon>
        <taxon>Myomorpha</taxon>
        <taxon>Muroidea</taxon>
        <taxon>Muridae</taxon>
        <taxon>Murinae</taxon>
        <taxon>Mus</taxon>
        <taxon>Mus</taxon>
    </lineage>
</organism>
<keyword id="KW-0067">ATP-binding</keyword>
<keyword id="KW-0091">Biomineralization</keyword>
<keyword id="KW-0106">Calcium</keyword>
<keyword id="KW-1015">Disulfide bond</keyword>
<keyword id="KW-0256">Endoplasmic reticulum</keyword>
<keyword id="KW-0325">Glycoprotein</keyword>
<keyword id="KW-0333">Golgi apparatus</keyword>
<keyword id="KW-0418">Kinase</keyword>
<keyword id="KW-0464">Manganese</keyword>
<keyword id="KW-0472">Membrane</keyword>
<keyword id="KW-0479">Metal-binding</keyword>
<keyword id="KW-0547">Nucleotide-binding</keyword>
<keyword id="KW-0597">Phosphoprotein</keyword>
<keyword id="KW-1185">Reference proteome</keyword>
<keyword id="KW-0964">Secreted</keyword>
<keyword id="KW-0723">Serine/threonine-protein kinase</keyword>
<keyword id="KW-0735">Signal-anchor</keyword>
<keyword id="KW-0808">Transferase</keyword>
<keyword id="KW-0812">Transmembrane</keyword>
<keyword id="KW-1133">Transmembrane helix</keyword>
<name>FA20C_MOUSE</name>
<protein>
    <recommendedName>
        <fullName evidence="13">Extracellular serine/threonine protein kinase FAM20C</fullName>
        <ecNumber evidence="8">2.7.11.1</ecNumber>
    </recommendedName>
    <alternativeName>
        <fullName evidence="11">Dentin matrix protein 4</fullName>
        <shortName evidence="11">DMP-4</shortName>
    </alternativeName>
    <alternativeName>
        <fullName evidence="1">Golgi-enriched fraction casein kinase</fullName>
        <shortName evidence="1">GEF-CK</shortName>
    </alternativeName>
</protein>
<accession>Q5MJS3</accession>
<accession>Q4FJP0</accession>
<accession>Q571A3</accession>
<accession>Q6PKA8</accession>
<accession>Q8JZP7</accession>
<evidence type="ECO:0000250" key="1">
    <source>
        <dbReference type="UniProtKB" id="Q8IXL6"/>
    </source>
</evidence>
<evidence type="ECO:0000250" key="2">
    <source>
        <dbReference type="UniProtKB" id="Q9XTW2"/>
    </source>
</evidence>
<evidence type="ECO:0000255" key="3"/>
<evidence type="ECO:0000256" key="4">
    <source>
        <dbReference type="SAM" id="MobiDB-lite"/>
    </source>
</evidence>
<evidence type="ECO:0000269" key="5">
    <source>
    </source>
</evidence>
<evidence type="ECO:0000269" key="6">
    <source>
    </source>
</evidence>
<evidence type="ECO:0000269" key="7">
    <source>
    </source>
</evidence>
<evidence type="ECO:0000269" key="8">
    <source>
    </source>
</evidence>
<evidence type="ECO:0000269" key="9">
    <source>
    </source>
</evidence>
<evidence type="ECO:0000269" key="10">
    <source>
    </source>
</evidence>
<evidence type="ECO:0000303" key="11">
    <source>
    </source>
</evidence>
<evidence type="ECO:0000303" key="12">
    <source ref="2"/>
</evidence>
<evidence type="ECO:0000305" key="13"/>
<evidence type="ECO:0000312" key="14">
    <source>
        <dbReference type="MGI" id="MGI:2136853"/>
    </source>
</evidence>
<proteinExistence type="evidence at protein level"/>
<comment type="function">
    <text evidence="1 7 8 9">Golgi serine/threonine protein kinase that phosphorylates secretory pathway proteins within Ser-x-Glu/pSer motifs and plays a key role in biomineralization of bones and teeth (PubMed:22732358, PubMed:22900076, PubMed:25789606). Constitutes the main protein kinase for extracellular proteins, generating the majority of the extracellular phosphoproteome (By similarity). Mainly phosphorylates proteins within the Ser-x-Glu/pSer motif, but also displays a broader substrate specificity (By similarity). Phosphorylates ERO1A, enhancing its activity which is required to maintain endoplasmic reticulum redox homeostasis and for oxidative protein folding (By similarity). During endoplasmic reticulum stress, phosphorylates P4HB/PDIA1 which induces a functional switch, causing P4HB to change from an oxidoreductase to a molecular chaperone (By similarity). This is critical to maintain ER proteostasis and reduce cell death under ER stress (By similarity). Phosphorylation of P4HB also promotes its interaction with ERN1, leading to reduced activity of ERN1, a key sensor for the endoplasmic reticulum unfolded protein response (By similarity). Required for osteoblast differentiation and mineralization (By similarity). Phosphorylates casein as well as a number of proteins involved in biomineralization such as AMELX, AMTN, ENAM and SPP1 (PubMed:25789606). In addition to its role in biomineralization, also plays a role in lipid homeostasis, wound healing and cell migration and adhesion (By similarity).</text>
</comment>
<comment type="catalytic activity">
    <reaction evidence="8">
        <text>L-seryl-[protein] + ATP = O-phospho-L-seryl-[protein] + ADP + H(+)</text>
        <dbReference type="Rhea" id="RHEA:17989"/>
        <dbReference type="Rhea" id="RHEA-COMP:9863"/>
        <dbReference type="Rhea" id="RHEA-COMP:11604"/>
        <dbReference type="ChEBI" id="CHEBI:15378"/>
        <dbReference type="ChEBI" id="CHEBI:29999"/>
        <dbReference type="ChEBI" id="CHEBI:30616"/>
        <dbReference type="ChEBI" id="CHEBI:83421"/>
        <dbReference type="ChEBI" id="CHEBI:456216"/>
        <dbReference type="EC" id="2.7.11.1"/>
    </reaction>
</comment>
<comment type="catalytic activity">
    <reaction evidence="8">
        <text>L-threonyl-[protein] + ATP = O-phospho-L-threonyl-[protein] + ADP + H(+)</text>
        <dbReference type="Rhea" id="RHEA:46608"/>
        <dbReference type="Rhea" id="RHEA-COMP:11060"/>
        <dbReference type="Rhea" id="RHEA-COMP:11605"/>
        <dbReference type="ChEBI" id="CHEBI:15378"/>
        <dbReference type="ChEBI" id="CHEBI:30013"/>
        <dbReference type="ChEBI" id="CHEBI:30616"/>
        <dbReference type="ChEBI" id="CHEBI:61977"/>
        <dbReference type="ChEBI" id="CHEBI:456216"/>
        <dbReference type="EC" id="2.7.11.1"/>
    </reaction>
</comment>
<comment type="cofactor">
    <cofactor evidence="1">
        <name>Mn(2+)</name>
        <dbReference type="ChEBI" id="CHEBI:29035"/>
    </cofactor>
</comment>
<comment type="activity regulation">
    <text evidence="9">Serine/threonine protein kinase activity is increased upon interaction with FAM20A.</text>
</comment>
<comment type="biophysicochemical properties">
    <kinetics>
        <KM evidence="8">1.5 uM for casein</KM>
        <KM evidence="8">78 uM for ATP</KM>
        <Vmax evidence="8">0.7 umol/min/mg enzyme</Vmax>
        <text evidence="8">kcat is 52 min(-1).</text>
    </kinetics>
</comment>
<comment type="subunit">
    <text evidence="1 9">Homodimer; disulfide-linked (By similarity). Interacts with FAM20A; probably forming a heterotetramer of 2 subunits of FAM20A and 2 subunits of FAM20C (PubMed:25789606). Interacts with COPII components SEC23A and SEC24A; transport of FAM20C from the endoplasmic reticulum to the Golgi is likely to be mediated by COPII vesicles (By similarity).</text>
</comment>
<comment type="subcellular location">
    <subcellularLocation>
        <location evidence="1">Golgi apparatus membrane</location>
        <topology evidence="1">Single-pass type II membrane protein</topology>
    </subcellularLocation>
    <subcellularLocation>
        <location evidence="5">Secreted</location>
    </subcellularLocation>
    <subcellularLocation>
        <location evidence="1">Endoplasmic reticulum</location>
    </subcellularLocation>
    <text evidence="1">Resides in the Golgi apparatus membrane and is secreted following propeptide cleavage. Retained in the endoplasmic reticulum (ER) in response to ER stress where it phosphorylates P4HB.</text>
</comment>
<comment type="tissue specificity">
    <text evidence="5 6 10">In the mammary gland, expressed at higher levels in lactating mice than in virgin mice (at protein level) (PubMed:29858230). Highly expressed in the tooth. No expression in the dental pulp. At the secretory stage of amelogenesis, it is detected in the matrix of the enamel, in the ameloblasts, and within the cells adjoining the stratum intermedium (a tissue layer analogous to the stellate reticulum seen in the developing molar). Strong expression is observed in maturation stage ameloblasts and throughout the non-cornified layers of the gingival epithelium. Expressed at moderate levels in bone and at low levels in kidney, liver, brain and lung. Very low expression, if any, in spleen and skeletal muscle.</text>
</comment>
<comment type="developmental stage">
    <text evidence="5">In the developing tooth, initial expression observed in odontoblasts at all stages of development. At later stages, restricted expression pattern in ameloblasts. Also observed in osteoblasts in the alveolar bone.</text>
</comment>
<comment type="PTM">
    <text evidence="1">N-glycosylation is required for folding.</text>
</comment>
<comment type="PTM">
    <text evidence="1">Autophosphorylated.</text>
</comment>
<comment type="PTM">
    <text evidence="1">Propeptide cleavage by MBTPS1/S1P promotes FAM20C secretion and maximal kinase activity which is essential for efficient osteoblast differentiation and biomineralization.</text>
</comment>
<comment type="disruption phenotype">
    <text evidence="7">Mice survive to adulthood and show biomineralization defects, suc as severe amelogenesis imperfecta (AI). In addition, mice are severely hypophosphatemic and develop notable lesions in both dentin and bone.</text>
</comment>
<comment type="similarity">
    <text evidence="13">Belongs to the FAM20 family.</text>
</comment>
<comment type="sequence caution" evidence="13">
    <conflict type="erroneous initiation">
        <sequence resource="EMBL-CDS" id="AAH04044"/>
    </conflict>
    <text>Truncated N-terminus.</text>
</comment>
<comment type="sequence caution" evidence="13">
    <conflict type="frameshift">
        <sequence resource="EMBL-CDS" id="AAH04044"/>
    </conflict>
</comment>
<comment type="sequence caution" evidence="13">
    <conflict type="erroneous initiation">
        <sequence resource="EMBL-CDS" id="AAH25814"/>
    </conflict>
</comment>
<comment type="sequence caution" evidence="13">
    <conflict type="erroneous initiation">
        <sequence resource="EMBL-CDS" id="AAH25826"/>
    </conflict>
</comment>
<comment type="sequence caution" evidence="13">
    <conflict type="erroneous initiation">
        <sequence resource="EMBL-CDS" id="BAD90211"/>
    </conflict>
    <text>Extended N-terminus.</text>
</comment>
<comment type="sequence caution" evidence="13">
    <conflict type="frameshift">
        <sequence resource="EMBL-CDS" id="BAD90211"/>
    </conflict>
</comment>
<reference key="1">
    <citation type="journal article" date="2007" name="J. Biol. Chem.">
        <title>Dentin matrix protein 4, a novel secretory calcium-binding protein that modulates odontoblast differentiation.</title>
        <authorList>
            <person name="Hao J."/>
            <person name="Narayanan K."/>
            <person name="Muni T."/>
            <person name="Ramachandran A."/>
            <person name="George A."/>
        </authorList>
    </citation>
    <scope>NUCLEOTIDE SEQUENCE [MRNA]</scope>
    <scope>SUBCELLULAR LOCATION</scope>
    <scope>TISSUE SPECIFICITY</scope>
    <scope>DEVELOPMENTAL STAGE</scope>
</reference>
<reference key="2">
    <citation type="submission" date="2005-02" db="EMBL/GenBank/DDBJ databases">
        <title>Prediction of the coding sequences of mouse homologues of KIAA gene. The complete nucleotide sequences of mouse KIAA-homologous cDNAs identified by screening of terminal sequences of cDNA clones randomly sampled from size-fractionated libraries.</title>
        <authorList>
            <person name="Okazaki N."/>
            <person name="Kikuno R.F."/>
            <person name="Ohara R."/>
            <person name="Inamoto S."/>
            <person name="Seino S."/>
            <person name="Nishimura M."/>
            <person name="Nagase T."/>
            <person name="Ohara O."/>
            <person name="Koga H."/>
        </authorList>
    </citation>
    <scope>NUCLEOTIDE SEQUENCE [LARGE SCALE MRNA]</scope>
    <source>
        <tissue>Pancreatic islet</tissue>
    </source>
</reference>
<reference key="3">
    <citation type="journal article" date="2004" name="Genome Res.">
        <title>The status, quality, and expansion of the NIH full-length cDNA project: the Mammalian Gene Collection (MGC).</title>
        <authorList>
            <consortium name="The MGC Project Team"/>
        </authorList>
    </citation>
    <scope>NUCLEOTIDE SEQUENCE [LARGE SCALE MRNA]</scope>
    <source>
        <strain>FVB/N</strain>
        <tissue>Liver</tissue>
        <tissue>Mammary tumor</tissue>
    </source>
</reference>
<reference key="4">
    <citation type="submission" date="2005-07" db="EMBL/GenBank/DDBJ databases">
        <title>Cloning of mouse full open reading frames in Gateway(R) system entry vector (pDONR201).</title>
        <authorList>
            <person name="Ebert L."/>
            <person name="Muenstermann E."/>
            <person name="Schatten R."/>
            <person name="Henze S."/>
            <person name="Bohn E."/>
            <person name="Mollenhauer J."/>
            <person name="Wiemann S."/>
            <person name="Schick M."/>
            <person name="Korn B."/>
        </authorList>
    </citation>
    <scope>NUCLEOTIDE SEQUENCE [LARGE SCALE MRNA] OF 331-579</scope>
</reference>
<reference key="5">
    <citation type="journal article" date="2011" name="Am. J. Hum. Genet.">
        <title>Whole-exome sequencing identifies FAM20A mutations as a cause of amelogenesis imperfecta and gingival hyperplasia syndrome.</title>
        <authorList>
            <person name="O'Sullivan J."/>
            <person name="Bitu C.C."/>
            <person name="Daly S.B."/>
            <person name="Urquhart J.E."/>
            <person name="Barron M.J."/>
            <person name="Bhaskar S.S."/>
            <person name="Martelli-Junior H."/>
            <person name="dos Santos Neto P.E."/>
            <person name="Mansilla M.A."/>
            <person name="Murray J.C."/>
            <person name="Coletta R.D."/>
            <person name="Black G.C."/>
            <person name="Dixon M.J."/>
        </authorList>
    </citation>
    <scope>TISSUE SPECIFICITY</scope>
</reference>
<reference key="6">
    <citation type="journal article" date="2012" name="PLoS ONE">
        <title>The Raine syndrome protein FAM20C is a Golgi kinase that phosphorylates bio-mineralization proteins.</title>
        <authorList>
            <person name="Ishikawa H.O."/>
            <person name="Xu A."/>
            <person name="Ogura E."/>
            <person name="Manning G."/>
            <person name="Irvine K.D."/>
        </authorList>
    </citation>
    <scope>FUNCTION</scope>
    <scope>CATALYTIC ACTIVITY</scope>
    <scope>BIOPHYSICOCHEMICAL PROPERTIES</scope>
    <scope>SUBCELLULAR LOCATION</scope>
    <scope>MUTAGENESIS OF ILE-241; GLY-261; GLY-374; LEU-383; ASP-446; ASP-453; 473-ASP-ASN-474 AND ARG-544</scope>
</reference>
<reference key="7">
    <citation type="journal article" date="2012" name="Vet. Pathol.">
        <title>Amelogenesis imperfecta and other biomineralization defects in Fam20a and Fam20c null mice.</title>
        <authorList>
            <person name="Vogel P."/>
            <person name="Hansen G.M."/>
            <person name="Read R.W."/>
            <person name="Vance R.B."/>
            <person name="Thiel M."/>
            <person name="Liu J."/>
            <person name="Wronski T.J."/>
            <person name="Smith D.D."/>
            <person name="Jeter-Jones S."/>
            <person name="Brommage R."/>
        </authorList>
    </citation>
    <scope>FUNCTION</scope>
    <scope>DISRUPTION PHENOTYPE</scope>
</reference>
<reference key="8">
    <citation type="journal article" date="2015" name="Elife">
        <title>A secretory kinase complex regulates extracellular protein phosphorylation.</title>
        <authorList>
            <person name="Cui J."/>
            <person name="Xiao J."/>
            <person name="Tagliabracci V.S."/>
            <person name="Wen J."/>
            <person name="Rahdar M."/>
            <person name="Dixon J.E."/>
        </authorList>
    </citation>
    <scope>FUNCTION</scope>
    <scope>INTERACTION WITH FAM20A</scope>
    <scope>ACTIVITY REGULATION</scope>
</reference>
<reference key="9">
    <citation type="journal article" date="2018" name="EMBO J.">
        <title>Secretory kinase Fam20C tunes endoplasmic reticulum redox state via phosphorylation of Ero1alpha.</title>
        <authorList>
            <person name="Zhang J."/>
            <person name="Zhu Q."/>
            <person name="Wang X."/>
            <person name="Yu J."/>
            <person name="Chen X."/>
            <person name="Wang J."/>
            <person name="Wang X."/>
            <person name="Xiao J."/>
            <person name="Wang C.C."/>
            <person name="Wang L."/>
        </authorList>
    </citation>
    <scope>TISSUE SPECIFICITY</scope>
</reference>
<gene>
    <name evidence="14" type="primary">Fam20c</name>
    <name evidence="11" type="synonym">Dmp4</name>
    <name evidence="12" type="synonym">Kiaa4081</name>
</gene>